<gene>
    <name type="primary">nodJ</name>
</gene>
<sequence>MSGDSVTALPGGSLNWIAVWRRNYIAWKKAALASLLGHLAEPLIYLFGLGAGLGVMVGRVGGVSYTAFLAAGMVATSAMTAATFETIYAAFGRMEGQRTWEAMLYTQLRLGDIVLGEMAWAATKAALAGAGIGVVAAALGYTQWLSLLYALPVIALTGLAFASLGMVVTALAPSYDYFIFYQTLVITPILFLSGAVFPVDQLPIVFQTAARFLPLSHSIDLIRPIMLGHPVVDVCQHVGALCIYIVIPFFLSTALLRRRLLR</sequence>
<evidence type="ECO:0000250" key="1"/>
<evidence type="ECO:0000255" key="2"/>
<evidence type="ECO:0000255" key="3">
    <source>
        <dbReference type="PROSITE-ProRule" id="PRU00442"/>
    </source>
</evidence>
<evidence type="ECO:0000305" key="4"/>
<organism>
    <name type="scientific">Rhizobium leguminosarum bv. trifolii</name>
    <dbReference type="NCBI Taxonomy" id="386"/>
    <lineage>
        <taxon>Bacteria</taxon>
        <taxon>Pseudomonadati</taxon>
        <taxon>Pseudomonadota</taxon>
        <taxon>Alphaproteobacteria</taxon>
        <taxon>Hyphomicrobiales</taxon>
        <taxon>Rhizobiaceae</taxon>
        <taxon>Rhizobium/Agrobacterium group</taxon>
        <taxon>Rhizobium</taxon>
    </lineage>
</organism>
<protein>
    <recommendedName>
        <fullName>Nodulation protein J</fullName>
    </recommendedName>
</protein>
<proteinExistence type="inferred from homology"/>
<feature type="chain" id="PRO_0000182987" description="Nodulation protein J">
    <location>
        <begin position="1"/>
        <end position="262"/>
    </location>
</feature>
<feature type="transmembrane region" description="Helical" evidence="2">
    <location>
        <begin position="35"/>
        <end position="55"/>
    </location>
</feature>
<feature type="transmembrane region" description="Helical" evidence="2">
    <location>
        <begin position="60"/>
        <end position="80"/>
    </location>
</feature>
<feature type="transmembrane region" description="Helical" evidence="2">
    <location>
        <begin position="125"/>
        <end position="145"/>
    </location>
</feature>
<feature type="transmembrane region" description="Helical" evidence="2">
    <location>
        <begin position="148"/>
        <end position="168"/>
    </location>
</feature>
<feature type="transmembrane region" description="Helical" evidence="2">
    <location>
        <begin position="177"/>
        <end position="197"/>
    </location>
</feature>
<feature type="transmembrane region" description="Helical" evidence="2">
    <location>
        <begin position="231"/>
        <end position="251"/>
    </location>
</feature>
<feature type="domain" description="ABC transmembrane type-2" evidence="3">
    <location>
        <begin position="33"/>
        <end position="259"/>
    </location>
</feature>
<dbReference type="EMBL" id="X51411">
    <property type="protein sequence ID" value="CAA35772.1"/>
    <property type="molecule type" value="Genomic_DNA"/>
</dbReference>
<dbReference type="PIR" id="S08617">
    <property type="entry name" value="S08617"/>
</dbReference>
<dbReference type="SMR" id="P24144"/>
<dbReference type="GO" id="GO:0043190">
    <property type="term" value="C:ATP-binding cassette (ABC) transporter complex"/>
    <property type="evidence" value="ECO:0007669"/>
    <property type="project" value="InterPro"/>
</dbReference>
<dbReference type="GO" id="GO:0140359">
    <property type="term" value="F:ABC-type transporter activity"/>
    <property type="evidence" value="ECO:0007669"/>
    <property type="project" value="InterPro"/>
</dbReference>
<dbReference type="GO" id="GO:0015772">
    <property type="term" value="P:oligosaccharide transport"/>
    <property type="evidence" value="ECO:0007669"/>
    <property type="project" value="InterPro"/>
</dbReference>
<dbReference type="InterPro" id="IPR013525">
    <property type="entry name" value="ABC2_TM"/>
</dbReference>
<dbReference type="InterPro" id="IPR047817">
    <property type="entry name" value="ABC2_TM_bact-type"/>
</dbReference>
<dbReference type="InterPro" id="IPR000412">
    <property type="entry name" value="ABC_2_transport"/>
</dbReference>
<dbReference type="InterPro" id="IPR005981">
    <property type="entry name" value="ABC_transptNodJ"/>
</dbReference>
<dbReference type="InterPro" id="IPR051784">
    <property type="entry name" value="Nod_factor_ABC_transporter"/>
</dbReference>
<dbReference type="NCBIfam" id="TIGR01291">
    <property type="entry name" value="nodJ"/>
    <property type="match status" value="1"/>
</dbReference>
<dbReference type="PANTHER" id="PTHR43229">
    <property type="entry name" value="NODULATION PROTEIN J"/>
    <property type="match status" value="1"/>
</dbReference>
<dbReference type="PANTHER" id="PTHR43229:SF2">
    <property type="entry name" value="NODULATION PROTEIN J"/>
    <property type="match status" value="1"/>
</dbReference>
<dbReference type="Pfam" id="PF01061">
    <property type="entry name" value="ABC2_membrane"/>
    <property type="match status" value="1"/>
</dbReference>
<dbReference type="PIRSF" id="PIRSF006648">
    <property type="entry name" value="DrrB"/>
    <property type="match status" value="1"/>
</dbReference>
<dbReference type="PRINTS" id="PR00164">
    <property type="entry name" value="ABC2TRNSPORT"/>
</dbReference>
<dbReference type="PROSITE" id="PS51012">
    <property type="entry name" value="ABC_TM2"/>
    <property type="match status" value="1"/>
</dbReference>
<comment type="function">
    <text evidence="1">Part of the ABC transporter complex NodIJ involved in the export of the nodulation factors (Nod factors), the bacterial signal molecules that induce symbiosis and subsequent nodulation induction. Nod factors are LCO (lipo-chitin oligosaccharide), a modified beta-1,4-linked N-acetylglucosamine oligosaccharide. This subunit encodes the transporter (By similarity).</text>
</comment>
<comment type="subunit">
    <text evidence="4">The complex is composed of two ATP-binding proteins (NodI) and two transmembrane proteins (NodJ).</text>
</comment>
<comment type="subcellular location">
    <subcellularLocation>
        <location evidence="4">Cell inner membrane</location>
        <topology evidence="4">Multi-pass membrane protein</topology>
    </subcellularLocation>
</comment>
<comment type="similarity">
    <text evidence="4">Belongs to the ABC-2 integral membrane protein family. Lipooligosaccharide exporter (TC 3.A.1.102) subfamily.</text>
</comment>
<geneLocation type="plasmid">
    <name>sym pRtr843e</name>
</geneLocation>
<name>NODJ_RHILT</name>
<reference key="1">
    <citation type="journal article" date="1990" name="Mol. Microbiol.">
        <title>Molecular characterization of the nodulation gene, nodT, from two biovars of Rhizobium leguminosarum.</title>
        <authorList>
            <person name="Surin B.P."/>
            <person name="Watson J.M."/>
            <person name="Hamilton W.D.O."/>
            <person name="Economou A."/>
            <person name="Downie J.A."/>
        </authorList>
    </citation>
    <scope>NUCLEOTIDE SEQUENCE [GENOMIC DNA]</scope>
    <source>
        <strain>ANU 843</strain>
    </source>
</reference>
<accession>P24144</accession>
<keyword id="KW-0997">Cell inner membrane</keyword>
<keyword id="KW-1003">Cell membrane</keyword>
<keyword id="KW-0472">Membrane</keyword>
<keyword id="KW-0536">Nodulation</keyword>
<keyword id="KW-0614">Plasmid</keyword>
<keyword id="KW-0812">Transmembrane</keyword>
<keyword id="KW-1133">Transmembrane helix</keyword>
<keyword id="KW-0813">Transport</keyword>